<protein>
    <recommendedName>
        <fullName>Methenyltetrahydromethanopterin cyclohydrolase</fullName>
        <ecNumber>3.5.4.27</ecNumber>
    </recommendedName>
    <alternativeName>
        <fullName>Methenyl-H4MPT cyclohydrolase</fullName>
    </alternativeName>
</protein>
<gene>
    <name type="primary">mch</name>
    <name type="ordered locus">MTH_773</name>
</gene>
<evidence type="ECO:0000250" key="1"/>
<evidence type="ECO:0000305" key="2"/>
<organism>
    <name type="scientific">Methanothermobacter thermautotrophicus (strain ATCC 29096 / DSM 1053 / JCM 10044 / NBRC 100330 / Delta H)</name>
    <name type="common">Methanobacterium thermoautotrophicum</name>
    <dbReference type="NCBI Taxonomy" id="187420"/>
    <lineage>
        <taxon>Archaea</taxon>
        <taxon>Methanobacteriati</taxon>
        <taxon>Methanobacteriota</taxon>
        <taxon>Methanomada group</taxon>
        <taxon>Methanobacteria</taxon>
        <taxon>Methanobacteriales</taxon>
        <taxon>Methanobacteriaceae</taxon>
        <taxon>Methanothermobacter</taxon>
    </lineage>
</organism>
<proteinExistence type="inferred from homology"/>
<name>MCH_METTH</name>
<dbReference type="EC" id="3.5.4.27"/>
<dbReference type="EMBL" id="AE000666">
    <property type="protein sequence ID" value="AAB85276.1"/>
    <property type="molecule type" value="Genomic_DNA"/>
</dbReference>
<dbReference type="PIR" id="D69203">
    <property type="entry name" value="D69203"/>
</dbReference>
<dbReference type="RefSeq" id="WP_010876411.1">
    <property type="nucleotide sequence ID" value="NC_000916.1"/>
</dbReference>
<dbReference type="SMR" id="O26867"/>
<dbReference type="FunCoup" id="O26867">
    <property type="interactions" value="67"/>
</dbReference>
<dbReference type="STRING" id="187420.MTH_773"/>
<dbReference type="PaxDb" id="187420-MTH_773"/>
<dbReference type="EnsemblBacteria" id="AAB85276">
    <property type="protein sequence ID" value="AAB85276"/>
    <property type="gene ID" value="MTH_773"/>
</dbReference>
<dbReference type="GeneID" id="1471181"/>
<dbReference type="GeneID" id="77401308"/>
<dbReference type="KEGG" id="mth:MTH_773"/>
<dbReference type="PATRIC" id="fig|187420.15.peg.761"/>
<dbReference type="HOGENOM" id="CLU_876031_0_0_2"/>
<dbReference type="InParanoid" id="O26867"/>
<dbReference type="UniPathway" id="UPA00640">
    <property type="reaction ID" value="UER00694"/>
</dbReference>
<dbReference type="Proteomes" id="UP000005223">
    <property type="component" value="Chromosome"/>
</dbReference>
<dbReference type="GO" id="GO:0005737">
    <property type="term" value="C:cytoplasm"/>
    <property type="evidence" value="ECO:0007669"/>
    <property type="project" value="UniProtKB-SubCell"/>
</dbReference>
<dbReference type="GO" id="GO:0018759">
    <property type="term" value="F:methenyltetrahydromethanopterin cyclohydrolase activity"/>
    <property type="evidence" value="ECO:0007669"/>
    <property type="project" value="UniProtKB-UniRule"/>
</dbReference>
<dbReference type="GO" id="GO:0019386">
    <property type="term" value="P:methanogenesis, from carbon dioxide"/>
    <property type="evidence" value="ECO:0007669"/>
    <property type="project" value="UniProtKB-UniRule"/>
</dbReference>
<dbReference type="GO" id="GO:0006730">
    <property type="term" value="P:one-carbon metabolic process"/>
    <property type="evidence" value="ECO:0007669"/>
    <property type="project" value="UniProtKB-UniRule"/>
</dbReference>
<dbReference type="CDD" id="cd00545">
    <property type="entry name" value="MCH"/>
    <property type="match status" value="1"/>
</dbReference>
<dbReference type="Gene3D" id="3.10.340.11">
    <property type="entry name" value="Methenyltetrahydromethanopterin Cyclohydrolase, Chain A, domain 1"/>
    <property type="match status" value="1"/>
</dbReference>
<dbReference type="Gene3D" id="3.30.1030.10">
    <property type="entry name" value="Methenyltetrahydromethanopterin Cyclohydrolase, Chain A, domain 2"/>
    <property type="match status" value="1"/>
</dbReference>
<dbReference type="HAMAP" id="MF_00486">
    <property type="entry name" value="McH"/>
    <property type="match status" value="1"/>
</dbReference>
<dbReference type="InterPro" id="IPR003209">
    <property type="entry name" value="METHMP_CycHdrlase"/>
</dbReference>
<dbReference type="NCBIfam" id="TIGR03120">
    <property type="entry name" value="one_C_mch"/>
    <property type="match status" value="1"/>
</dbReference>
<dbReference type="Pfam" id="PF02289">
    <property type="entry name" value="MCH"/>
    <property type="match status" value="1"/>
</dbReference>
<dbReference type="SUPFAM" id="SSF56199">
    <property type="entry name" value="Methenyltetrahydromethanopterin cyclohydrolase"/>
    <property type="match status" value="1"/>
</dbReference>
<reference key="1">
    <citation type="journal article" date="1997" name="J. Bacteriol.">
        <title>Complete genome sequence of Methanobacterium thermoautotrophicum deltaH: functional analysis and comparative genomics.</title>
        <authorList>
            <person name="Smith D.R."/>
            <person name="Doucette-Stamm L.A."/>
            <person name="Deloughery C."/>
            <person name="Lee H.-M."/>
            <person name="Dubois J."/>
            <person name="Aldredge T."/>
            <person name="Bashirzadeh R."/>
            <person name="Blakely D."/>
            <person name="Cook R."/>
            <person name="Gilbert K."/>
            <person name="Harrison D."/>
            <person name="Hoang L."/>
            <person name="Keagle P."/>
            <person name="Lumm W."/>
            <person name="Pothier B."/>
            <person name="Qiu D."/>
            <person name="Spadafora R."/>
            <person name="Vicare R."/>
            <person name="Wang Y."/>
            <person name="Wierzbowski J."/>
            <person name="Gibson R."/>
            <person name="Jiwani N."/>
            <person name="Caruso A."/>
            <person name="Bush D."/>
            <person name="Safer H."/>
            <person name="Patwell D."/>
            <person name="Prabhakar S."/>
            <person name="McDougall S."/>
            <person name="Shimer G."/>
            <person name="Goyal A."/>
            <person name="Pietrovski S."/>
            <person name="Church G.M."/>
            <person name="Daniels C.J."/>
            <person name="Mao J.-I."/>
            <person name="Rice P."/>
            <person name="Noelling J."/>
            <person name="Reeve J.N."/>
        </authorList>
    </citation>
    <scope>NUCLEOTIDE SEQUENCE [LARGE SCALE GENOMIC DNA]</scope>
    <source>
        <strain>ATCC 29096 / DSM 1053 / JCM 10044 / NBRC 100330 / Delta H</strain>
    </source>
</reference>
<comment type="function">
    <text evidence="1">Catalyzes the reversible interconversion of 5-formyl-H(4)MPT to methenyl-H(4)MPT(+).</text>
</comment>
<comment type="catalytic activity">
    <reaction>
        <text>5,10-methenyl-5,6,7,8-tetrahydromethanopterin + H2O = N(5)-formyl-5,6,7,8-tetrahydromethanopterin + H(+)</text>
        <dbReference type="Rhea" id="RHEA:19053"/>
        <dbReference type="ChEBI" id="CHEBI:15377"/>
        <dbReference type="ChEBI" id="CHEBI:15378"/>
        <dbReference type="ChEBI" id="CHEBI:58018"/>
        <dbReference type="ChEBI" id="CHEBI:58337"/>
        <dbReference type="EC" id="3.5.4.27"/>
    </reaction>
</comment>
<comment type="pathway">
    <text>One-carbon metabolism; methanogenesis from CO(2); 5,10-methenyl-5,6,7,8-tetrahydromethanopterin from CO(2): step 3/3.</text>
</comment>
<comment type="subcellular location">
    <subcellularLocation>
        <location evidence="1">Cytoplasm</location>
    </subcellularLocation>
</comment>
<comment type="similarity">
    <text evidence="2">Belongs to the MCH family.</text>
</comment>
<accession>O26867</accession>
<feature type="chain" id="PRO_0000140884" description="Methenyltetrahydromethanopterin cyclohydrolase">
    <location>
        <begin position="1"/>
        <end position="320"/>
    </location>
</feature>
<keyword id="KW-0963">Cytoplasm</keyword>
<keyword id="KW-0378">Hydrolase</keyword>
<keyword id="KW-0484">Methanogenesis</keyword>
<keyword id="KW-0554">One-carbon metabolism</keyword>
<keyword id="KW-1185">Reference proteome</keyword>
<sequence>MVSVNLEAKKIVDRMIEKADDLKIKVDKLENGSTVIDCGVNVDGSIKAGELYTGVCLGGLADVGISIPGDLSERFALPSVKIKTDFPAISTLGAQKAGWSVSVGDFFALGSGPARALSLKPAETYEEIGYQDEADVAILTLEADKLPGEDVTDMIAEECDVAAENVYVLVAPTSSLVGSIQISGRVVENGTYKMLEALHFDVNKVKYAAGIAPIAPVDPDSLKAMGKTNDAVLFGGRTYYYIESEEGDDIKSLAENLPSSASEGYGKPFYDVFREADYDFYKIDKGMFAPAEVVINDLRTGDVFRAGFVNEELLMKSFGL</sequence>